<evidence type="ECO:0000255" key="1">
    <source>
        <dbReference type="HAMAP-Rule" id="MF_01007"/>
    </source>
</evidence>
<reference key="1">
    <citation type="journal article" date="2006" name="DNA Res.">
        <title>Genome sequence of the cat pathogen, Chlamydophila felis.</title>
        <authorList>
            <person name="Azuma Y."/>
            <person name="Hirakawa H."/>
            <person name="Yamashita A."/>
            <person name="Cai Y."/>
            <person name="Rahman M.A."/>
            <person name="Suzuki H."/>
            <person name="Mitaku S."/>
            <person name="Toh H."/>
            <person name="Goto S."/>
            <person name="Murakami T."/>
            <person name="Sugi K."/>
            <person name="Hayashi H."/>
            <person name="Fukushi H."/>
            <person name="Hattori M."/>
            <person name="Kuhara S."/>
            <person name="Shirai M."/>
        </authorList>
    </citation>
    <scope>NUCLEOTIDE SEQUENCE [LARGE SCALE GENOMIC DNA]</scope>
    <source>
        <strain>Fe/C-56</strain>
    </source>
</reference>
<gene>
    <name evidence="1" type="primary">rsmH</name>
    <name type="synonym">mraW</name>
    <name type="ordered locus">CF0636</name>
</gene>
<organism>
    <name type="scientific">Chlamydia felis (strain Fe/C-56)</name>
    <name type="common">Chlamydophila felis</name>
    <dbReference type="NCBI Taxonomy" id="264202"/>
    <lineage>
        <taxon>Bacteria</taxon>
        <taxon>Pseudomonadati</taxon>
        <taxon>Chlamydiota</taxon>
        <taxon>Chlamydiia</taxon>
        <taxon>Chlamydiales</taxon>
        <taxon>Chlamydiaceae</taxon>
        <taxon>Chlamydia/Chlamydophila group</taxon>
        <taxon>Chlamydia</taxon>
    </lineage>
</organism>
<dbReference type="EC" id="2.1.1.199" evidence="1"/>
<dbReference type="EMBL" id="AP006861">
    <property type="protein sequence ID" value="BAE81408.1"/>
    <property type="molecule type" value="Genomic_DNA"/>
</dbReference>
<dbReference type="RefSeq" id="WP_011458187.1">
    <property type="nucleotide sequence ID" value="NC_007899.1"/>
</dbReference>
<dbReference type="SMR" id="Q253Y0"/>
<dbReference type="STRING" id="264202.CF0636"/>
<dbReference type="KEGG" id="cfe:CF0636"/>
<dbReference type="eggNOG" id="COG0275">
    <property type="taxonomic scope" value="Bacteria"/>
</dbReference>
<dbReference type="HOGENOM" id="CLU_038422_3_0_0"/>
<dbReference type="OrthoDB" id="9806637at2"/>
<dbReference type="Proteomes" id="UP000001260">
    <property type="component" value="Chromosome"/>
</dbReference>
<dbReference type="GO" id="GO:0005737">
    <property type="term" value="C:cytoplasm"/>
    <property type="evidence" value="ECO:0007669"/>
    <property type="project" value="UniProtKB-SubCell"/>
</dbReference>
<dbReference type="GO" id="GO:0071424">
    <property type="term" value="F:rRNA (cytosine-N4-)-methyltransferase activity"/>
    <property type="evidence" value="ECO:0007669"/>
    <property type="project" value="UniProtKB-UniRule"/>
</dbReference>
<dbReference type="GO" id="GO:0070475">
    <property type="term" value="P:rRNA base methylation"/>
    <property type="evidence" value="ECO:0007669"/>
    <property type="project" value="UniProtKB-UniRule"/>
</dbReference>
<dbReference type="Gene3D" id="1.10.150.170">
    <property type="entry name" value="Putative methyltransferase TM0872, insert domain"/>
    <property type="match status" value="1"/>
</dbReference>
<dbReference type="Gene3D" id="3.40.50.150">
    <property type="entry name" value="Vaccinia Virus protein VP39"/>
    <property type="match status" value="1"/>
</dbReference>
<dbReference type="HAMAP" id="MF_01007">
    <property type="entry name" value="16SrRNA_methyltr_H"/>
    <property type="match status" value="1"/>
</dbReference>
<dbReference type="InterPro" id="IPR002903">
    <property type="entry name" value="RsmH"/>
</dbReference>
<dbReference type="InterPro" id="IPR023397">
    <property type="entry name" value="SAM-dep_MeTrfase_MraW_recog"/>
</dbReference>
<dbReference type="InterPro" id="IPR029063">
    <property type="entry name" value="SAM-dependent_MTases_sf"/>
</dbReference>
<dbReference type="NCBIfam" id="TIGR00006">
    <property type="entry name" value="16S rRNA (cytosine(1402)-N(4))-methyltransferase RsmH"/>
    <property type="match status" value="1"/>
</dbReference>
<dbReference type="PANTHER" id="PTHR11265:SF0">
    <property type="entry name" value="12S RRNA N4-METHYLCYTIDINE METHYLTRANSFERASE"/>
    <property type="match status" value="1"/>
</dbReference>
<dbReference type="PANTHER" id="PTHR11265">
    <property type="entry name" value="S-ADENOSYL-METHYLTRANSFERASE MRAW"/>
    <property type="match status" value="1"/>
</dbReference>
<dbReference type="Pfam" id="PF01795">
    <property type="entry name" value="Methyltransf_5"/>
    <property type="match status" value="1"/>
</dbReference>
<dbReference type="PIRSF" id="PIRSF004486">
    <property type="entry name" value="MraW"/>
    <property type="match status" value="1"/>
</dbReference>
<dbReference type="SUPFAM" id="SSF81799">
    <property type="entry name" value="Putative methyltransferase TM0872, insert domain"/>
    <property type="match status" value="1"/>
</dbReference>
<dbReference type="SUPFAM" id="SSF53335">
    <property type="entry name" value="S-adenosyl-L-methionine-dependent methyltransferases"/>
    <property type="match status" value="1"/>
</dbReference>
<proteinExistence type="inferred from homology"/>
<keyword id="KW-0963">Cytoplasm</keyword>
<keyword id="KW-0489">Methyltransferase</keyword>
<keyword id="KW-0698">rRNA processing</keyword>
<keyword id="KW-0949">S-adenosyl-L-methionine</keyword>
<keyword id="KW-0808">Transferase</keyword>
<protein>
    <recommendedName>
        <fullName evidence="1">Ribosomal RNA small subunit methyltransferase H</fullName>
        <ecNumber evidence="1">2.1.1.199</ecNumber>
    </recommendedName>
    <alternativeName>
        <fullName evidence="1">16S rRNA m(4)C1402 methyltransferase</fullName>
    </alternativeName>
    <alternativeName>
        <fullName evidence="1">rRNA (cytosine-N(4)-)-methyltransferase RsmH</fullName>
    </alternativeName>
</protein>
<feature type="chain" id="PRO_0000386796" description="Ribosomal RNA small subunit methyltransferase H">
    <location>
        <begin position="1"/>
        <end position="298"/>
    </location>
</feature>
<feature type="binding site" evidence="1">
    <location>
        <begin position="35"/>
        <end position="37"/>
    </location>
    <ligand>
        <name>S-adenosyl-L-methionine</name>
        <dbReference type="ChEBI" id="CHEBI:59789"/>
    </ligand>
</feature>
<feature type="binding site" evidence="1">
    <location>
        <position position="55"/>
    </location>
    <ligand>
        <name>S-adenosyl-L-methionine</name>
        <dbReference type="ChEBI" id="CHEBI:59789"/>
    </ligand>
</feature>
<feature type="binding site" evidence="1">
    <location>
        <position position="82"/>
    </location>
    <ligand>
        <name>S-adenosyl-L-methionine</name>
        <dbReference type="ChEBI" id="CHEBI:59789"/>
    </ligand>
</feature>
<feature type="binding site" evidence="1">
    <location>
        <position position="100"/>
    </location>
    <ligand>
        <name>S-adenosyl-L-methionine</name>
        <dbReference type="ChEBI" id="CHEBI:59789"/>
    </ligand>
</feature>
<feature type="binding site" evidence="1">
    <location>
        <position position="107"/>
    </location>
    <ligand>
        <name>S-adenosyl-L-methionine</name>
        <dbReference type="ChEBI" id="CHEBI:59789"/>
    </ligand>
</feature>
<accession>Q253Y0</accession>
<sequence length="298" mass="34125">MSEAPQHIPVLVNECLSLFADRNPKFFCDVTLGAGGHAEAFLSAYPSIVSYDGSDRDTMALSLAKERLEKFGNRVHLHHASFEDLAQNPRENVYDGILADLGVSSMQLDTLSRGFSFQGDDHDLDMRMDTSKGTTASEVLNTLREEDLGRIFREYGEEPQWKNAAKAIVQFRRHKKIITVRDLKEATTRVFPSYRLRKKIHPLTLIFQALRVYVNQEDVQLKVFLESAMRWLAPEGRLIIISFCSSEDRPVKWFFREAEAMGVGKILTKKVVMPTYEETRKNPRCRSAKLRCFEKKSS</sequence>
<comment type="function">
    <text evidence="1">Specifically methylates the N4 position of cytidine in position 1402 (C1402) of 16S rRNA.</text>
</comment>
<comment type="catalytic activity">
    <reaction evidence="1">
        <text>cytidine(1402) in 16S rRNA + S-adenosyl-L-methionine = N(4)-methylcytidine(1402) in 16S rRNA + S-adenosyl-L-homocysteine + H(+)</text>
        <dbReference type="Rhea" id="RHEA:42928"/>
        <dbReference type="Rhea" id="RHEA-COMP:10286"/>
        <dbReference type="Rhea" id="RHEA-COMP:10287"/>
        <dbReference type="ChEBI" id="CHEBI:15378"/>
        <dbReference type="ChEBI" id="CHEBI:57856"/>
        <dbReference type="ChEBI" id="CHEBI:59789"/>
        <dbReference type="ChEBI" id="CHEBI:74506"/>
        <dbReference type="ChEBI" id="CHEBI:82748"/>
        <dbReference type="EC" id="2.1.1.199"/>
    </reaction>
</comment>
<comment type="subcellular location">
    <subcellularLocation>
        <location evidence="1">Cytoplasm</location>
    </subcellularLocation>
</comment>
<comment type="similarity">
    <text evidence="1">Belongs to the methyltransferase superfamily. RsmH family.</text>
</comment>
<name>RSMH_CHLFF</name>